<gene>
    <name type="primary">psaD</name>
</gene>
<feature type="transit peptide" description="Chloroplast">
    <location>
        <begin position="1"/>
        <end position="50"/>
    </location>
</feature>
<feature type="chain" id="PRO_0000029375" description="Photosystem I reaction center subunit II, chloroplastic">
    <location>
        <begin position="51"/>
        <end position="208"/>
    </location>
</feature>
<feature type="region of interest" description="Disordered" evidence="2">
    <location>
        <begin position="52"/>
        <end position="78"/>
    </location>
</feature>
<keyword id="KW-0150">Chloroplast</keyword>
<keyword id="KW-0472">Membrane</keyword>
<keyword id="KW-0602">Photosynthesis</keyword>
<keyword id="KW-0603">Photosystem I</keyword>
<keyword id="KW-0934">Plastid</keyword>
<keyword id="KW-1185">Reference proteome</keyword>
<keyword id="KW-0793">Thylakoid</keyword>
<keyword id="KW-0809">Transit peptide</keyword>
<comment type="function">
    <text>PsaD can form complexes with ferredoxin and ferredoxin-oxidoreductase in photosystem I (PS I) reaction center. PSAD may encode the ferredoxin-docking protein.</text>
</comment>
<comment type="subcellular location">
    <subcellularLocation>
        <location evidence="1">Plastid</location>
        <location evidence="1">Chloroplast thylakoid membrane</location>
        <topology evidence="1">Peripheral membrane protein</topology>
        <orientation evidence="1">Stromal side</orientation>
    </subcellularLocation>
</comment>
<comment type="similarity">
    <text evidence="3">Belongs to the PsaD family.</text>
</comment>
<name>PSAD_SOLLC</name>
<dbReference type="EMBL" id="M21344">
    <property type="protein sequence ID" value="AAA34185.1"/>
    <property type="molecule type" value="mRNA"/>
</dbReference>
<dbReference type="PIR" id="S00449">
    <property type="entry name" value="S00449"/>
</dbReference>
<dbReference type="RefSeq" id="NP_001295880.1">
    <property type="nucleotide sequence ID" value="NM_001308951.1"/>
</dbReference>
<dbReference type="SMR" id="P12372"/>
<dbReference type="FunCoup" id="P12372">
    <property type="interactions" value="1064"/>
</dbReference>
<dbReference type="STRING" id="4081.P12372"/>
<dbReference type="PaxDb" id="4081-Solyc06g054260.1.1"/>
<dbReference type="EnsemblPlants" id="Solyc06g054260.1.1">
    <property type="protein sequence ID" value="Solyc06g054260.1.1.1"/>
    <property type="gene ID" value="Solyc06g054260.1"/>
</dbReference>
<dbReference type="GeneID" id="543978"/>
<dbReference type="Gramene" id="Solyc06g054260.1.1">
    <property type="protein sequence ID" value="Solyc06g054260.1.1.1"/>
    <property type="gene ID" value="Solyc06g054260.1"/>
</dbReference>
<dbReference type="KEGG" id="sly:543978"/>
<dbReference type="eggNOG" id="ENOG502QQIC">
    <property type="taxonomic scope" value="Eukaryota"/>
</dbReference>
<dbReference type="HOGENOM" id="CLU_087107_0_0_1"/>
<dbReference type="InParanoid" id="P12372"/>
<dbReference type="OMA" id="HNPRRIG"/>
<dbReference type="OrthoDB" id="44at2759"/>
<dbReference type="PhylomeDB" id="P12372"/>
<dbReference type="Proteomes" id="UP000004994">
    <property type="component" value="Chromosome 6"/>
</dbReference>
<dbReference type="GO" id="GO:0009535">
    <property type="term" value="C:chloroplast thylakoid membrane"/>
    <property type="evidence" value="ECO:0007669"/>
    <property type="project" value="UniProtKB-SubCell"/>
</dbReference>
<dbReference type="GO" id="GO:0009538">
    <property type="term" value="C:photosystem I reaction center"/>
    <property type="evidence" value="ECO:0007669"/>
    <property type="project" value="InterPro"/>
</dbReference>
<dbReference type="GO" id="GO:0015979">
    <property type="term" value="P:photosynthesis"/>
    <property type="evidence" value="ECO:0007669"/>
    <property type="project" value="UniProtKB-KW"/>
</dbReference>
<dbReference type="FunFam" id="3.30.1470.10:FF:000002">
    <property type="entry name" value="Photosystem I reaction center subunit II"/>
    <property type="match status" value="1"/>
</dbReference>
<dbReference type="Gene3D" id="3.30.1470.10">
    <property type="entry name" value="Photosystem I PsaD, reaction center subunit II"/>
    <property type="match status" value="1"/>
</dbReference>
<dbReference type="InterPro" id="IPR003685">
    <property type="entry name" value="PsaD"/>
</dbReference>
<dbReference type="InterPro" id="IPR036579">
    <property type="entry name" value="PsaD_sf"/>
</dbReference>
<dbReference type="PANTHER" id="PTHR31982:SF5">
    <property type="entry name" value="PHOTOSYSTEM I REACTION CENTER SUBUNIT II, CHLOROPLASTIC"/>
    <property type="match status" value="1"/>
</dbReference>
<dbReference type="PANTHER" id="PTHR31982">
    <property type="entry name" value="PHOTOSYSTEM I REACTION CENTER SUBUNIT II-1, CHLOROPLASTIC-RELATED"/>
    <property type="match status" value="1"/>
</dbReference>
<dbReference type="Pfam" id="PF02531">
    <property type="entry name" value="PsaD"/>
    <property type="match status" value="1"/>
</dbReference>
<dbReference type="SUPFAM" id="SSF64234">
    <property type="entry name" value="Photosystem I subunit PsaD"/>
    <property type="match status" value="1"/>
</dbReference>
<sequence>MAMATQASLFTPPLSVPKSTTAPWKQSLVSFSTPKQLKSTVSVTRPIRAMAEEAPAATEEKPAPAGFTPPQLDPNTPSPIFGGSTGGLLRKAQVEEFYVITWESPKEQIFEMPTGGAAIMRQGPNLLKLARKEQCLALGTRLRSKYKINYQFYRVFPNGEVQYLHPKDGVYPEKVNPGREGVGQNFRSIGKNKSAIEVKFTGKQVYDI</sequence>
<protein>
    <recommendedName>
        <fullName>Photosystem I reaction center subunit II, chloroplastic</fullName>
    </recommendedName>
    <alternativeName>
        <fullName>Photosystem I 20 kDa subunit</fullName>
        <shortName>PSI-D</shortName>
    </alternativeName>
</protein>
<proteinExistence type="evidence at transcript level"/>
<evidence type="ECO:0000250" key="1"/>
<evidence type="ECO:0000256" key="2">
    <source>
        <dbReference type="SAM" id="MobiDB-lite"/>
    </source>
</evidence>
<evidence type="ECO:0000305" key="3"/>
<organism>
    <name type="scientific">Solanum lycopersicum</name>
    <name type="common">Tomato</name>
    <name type="synonym">Lycopersicon esculentum</name>
    <dbReference type="NCBI Taxonomy" id="4081"/>
    <lineage>
        <taxon>Eukaryota</taxon>
        <taxon>Viridiplantae</taxon>
        <taxon>Streptophyta</taxon>
        <taxon>Embryophyta</taxon>
        <taxon>Tracheophyta</taxon>
        <taxon>Spermatophyta</taxon>
        <taxon>Magnoliopsida</taxon>
        <taxon>eudicotyledons</taxon>
        <taxon>Gunneridae</taxon>
        <taxon>Pentapetalae</taxon>
        <taxon>asterids</taxon>
        <taxon>lamiids</taxon>
        <taxon>Solanales</taxon>
        <taxon>Solanaceae</taxon>
        <taxon>Solanoideae</taxon>
        <taxon>Solaneae</taxon>
        <taxon>Solanum</taxon>
        <taxon>Solanum subgen. Lycopersicon</taxon>
    </lineage>
</organism>
<reference key="1">
    <citation type="journal article" date="1988" name="Plant Mol. Biol.">
        <title>Isolation and sequence of a tomato cDNA clone encoding subunit II of the photosystem I reaction center.</title>
        <authorList>
            <person name="Hoffman N.E."/>
            <person name="Pichersky E."/>
            <person name="Malik V.S."/>
            <person name="Ko K."/>
            <person name="Cashmore A.R."/>
        </authorList>
        <dbReference type="AGRICOLA" id="IND92000610"/>
    </citation>
    <scope>NUCLEOTIDE SEQUENCE [MRNA]</scope>
    <source>
        <tissue>Seedling</tissue>
    </source>
</reference>
<accession>P12372</accession>